<proteinExistence type="inferred from homology"/>
<gene>
    <name evidence="1" type="primary">pepT</name>
    <name type="ordered locus">Spro_2009</name>
</gene>
<sequence>MDKLLDRFFNYVSFDTQSKANVKHVPSTDGQMKLARALQQEMIELGFERVSLSEHGCVMGTLPGNVAWSVPAIGFISHLDTSPDFTGKHVNPQIVESYRGGDIALGIGDEVLSPVMFPILHQMLGQTLITTDGKTLLGADDKAGIAEILTAMVRLQQRNIPHGDIRVAFTPDEEVGKGARFFDVAQFNAEWAYTVDGGGVGELECENFNAASVTVKIVGNNVHPGSAKGVMVNALSLATRIQQALPADETPETTADYQGFYHLSSLKGSVERAEMHYILRDFEREGFEARKRRMFEVAKQVGKGLPRDCYIEVTIEDSYYNMREQVAEHPHVIALAQQAMRDCDIEPVMKPIRGGTDGAQLSFRGLPCPNLFTGGYNYHCKHEFVSLEGMEQAVAVIMRIAALTAERAK</sequence>
<keyword id="KW-0031">Aminopeptidase</keyword>
<keyword id="KW-0963">Cytoplasm</keyword>
<keyword id="KW-0378">Hydrolase</keyword>
<keyword id="KW-0479">Metal-binding</keyword>
<keyword id="KW-0482">Metalloprotease</keyword>
<keyword id="KW-0645">Protease</keyword>
<keyword id="KW-0862">Zinc</keyword>
<feature type="chain" id="PRO_1000061096" description="Peptidase T">
    <location>
        <begin position="1"/>
        <end position="409"/>
    </location>
</feature>
<feature type="active site" evidence="1">
    <location>
        <position position="80"/>
    </location>
</feature>
<feature type="active site" description="Proton acceptor" evidence="1">
    <location>
        <position position="173"/>
    </location>
</feature>
<feature type="binding site" evidence="1">
    <location>
        <position position="78"/>
    </location>
    <ligand>
        <name>Zn(2+)</name>
        <dbReference type="ChEBI" id="CHEBI:29105"/>
        <label>1</label>
    </ligand>
</feature>
<feature type="binding site" evidence="1">
    <location>
        <position position="140"/>
    </location>
    <ligand>
        <name>Zn(2+)</name>
        <dbReference type="ChEBI" id="CHEBI:29105"/>
        <label>1</label>
    </ligand>
</feature>
<feature type="binding site" evidence="1">
    <location>
        <position position="140"/>
    </location>
    <ligand>
        <name>Zn(2+)</name>
        <dbReference type="ChEBI" id="CHEBI:29105"/>
        <label>2</label>
    </ligand>
</feature>
<feature type="binding site" evidence="1">
    <location>
        <position position="174"/>
    </location>
    <ligand>
        <name>Zn(2+)</name>
        <dbReference type="ChEBI" id="CHEBI:29105"/>
        <label>2</label>
    </ligand>
</feature>
<feature type="binding site" evidence="1">
    <location>
        <position position="196"/>
    </location>
    <ligand>
        <name>Zn(2+)</name>
        <dbReference type="ChEBI" id="CHEBI:29105"/>
        <label>1</label>
    </ligand>
</feature>
<feature type="binding site" evidence="1">
    <location>
        <position position="379"/>
    </location>
    <ligand>
        <name>Zn(2+)</name>
        <dbReference type="ChEBI" id="CHEBI:29105"/>
        <label>2</label>
    </ligand>
</feature>
<accession>A8GDC2</accession>
<comment type="function">
    <text evidence="1">Cleaves the N-terminal amino acid of tripeptides.</text>
</comment>
<comment type="catalytic activity">
    <reaction evidence="1">
        <text>Release of the N-terminal residue from a tripeptide.</text>
        <dbReference type="EC" id="3.4.11.4"/>
    </reaction>
</comment>
<comment type="cofactor">
    <cofactor evidence="1">
        <name>Zn(2+)</name>
        <dbReference type="ChEBI" id="CHEBI:29105"/>
    </cofactor>
    <text evidence="1">Binds 2 Zn(2+) ions per subunit.</text>
</comment>
<comment type="subcellular location">
    <subcellularLocation>
        <location evidence="1">Cytoplasm</location>
    </subcellularLocation>
</comment>
<comment type="similarity">
    <text evidence="1">Belongs to the peptidase M20B family.</text>
</comment>
<organism>
    <name type="scientific">Serratia proteamaculans (strain 568)</name>
    <dbReference type="NCBI Taxonomy" id="399741"/>
    <lineage>
        <taxon>Bacteria</taxon>
        <taxon>Pseudomonadati</taxon>
        <taxon>Pseudomonadota</taxon>
        <taxon>Gammaproteobacteria</taxon>
        <taxon>Enterobacterales</taxon>
        <taxon>Yersiniaceae</taxon>
        <taxon>Serratia</taxon>
    </lineage>
</organism>
<dbReference type="EC" id="3.4.11.4" evidence="1"/>
<dbReference type="EMBL" id="CP000826">
    <property type="protein sequence ID" value="ABV41112.1"/>
    <property type="molecule type" value="Genomic_DNA"/>
</dbReference>
<dbReference type="SMR" id="A8GDC2"/>
<dbReference type="STRING" id="399741.Spro_2009"/>
<dbReference type="MEROPS" id="M20.003"/>
<dbReference type="KEGG" id="spe:Spro_2009"/>
<dbReference type="eggNOG" id="COG2195">
    <property type="taxonomic scope" value="Bacteria"/>
</dbReference>
<dbReference type="HOGENOM" id="CLU_053676_0_0_6"/>
<dbReference type="OrthoDB" id="9804934at2"/>
<dbReference type="GO" id="GO:0005829">
    <property type="term" value="C:cytosol"/>
    <property type="evidence" value="ECO:0007669"/>
    <property type="project" value="TreeGrafter"/>
</dbReference>
<dbReference type="GO" id="GO:0008237">
    <property type="term" value="F:metallopeptidase activity"/>
    <property type="evidence" value="ECO:0007669"/>
    <property type="project" value="UniProtKB-KW"/>
</dbReference>
<dbReference type="GO" id="GO:0045148">
    <property type="term" value="F:tripeptide aminopeptidase activity"/>
    <property type="evidence" value="ECO:0007669"/>
    <property type="project" value="UniProtKB-UniRule"/>
</dbReference>
<dbReference type="GO" id="GO:0008270">
    <property type="term" value="F:zinc ion binding"/>
    <property type="evidence" value="ECO:0007669"/>
    <property type="project" value="UniProtKB-UniRule"/>
</dbReference>
<dbReference type="GO" id="GO:0043171">
    <property type="term" value="P:peptide catabolic process"/>
    <property type="evidence" value="ECO:0007669"/>
    <property type="project" value="UniProtKB-UniRule"/>
</dbReference>
<dbReference type="GO" id="GO:0006508">
    <property type="term" value="P:proteolysis"/>
    <property type="evidence" value="ECO:0007669"/>
    <property type="project" value="UniProtKB-UniRule"/>
</dbReference>
<dbReference type="CDD" id="cd03892">
    <property type="entry name" value="M20_peptT"/>
    <property type="match status" value="1"/>
</dbReference>
<dbReference type="FunFam" id="3.30.70.360:FF:000002">
    <property type="entry name" value="Peptidase T"/>
    <property type="match status" value="1"/>
</dbReference>
<dbReference type="Gene3D" id="3.30.70.360">
    <property type="match status" value="1"/>
</dbReference>
<dbReference type="Gene3D" id="3.40.630.10">
    <property type="entry name" value="Zn peptidases"/>
    <property type="match status" value="1"/>
</dbReference>
<dbReference type="HAMAP" id="MF_00550">
    <property type="entry name" value="Aminopeptidase_M20"/>
    <property type="match status" value="1"/>
</dbReference>
<dbReference type="InterPro" id="IPR001261">
    <property type="entry name" value="ArgE/DapE_CS"/>
</dbReference>
<dbReference type="InterPro" id="IPR036264">
    <property type="entry name" value="Bact_exopeptidase_dim_dom"/>
</dbReference>
<dbReference type="InterPro" id="IPR002933">
    <property type="entry name" value="Peptidase_M20"/>
</dbReference>
<dbReference type="InterPro" id="IPR011650">
    <property type="entry name" value="Peptidase_M20_dimer"/>
</dbReference>
<dbReference type="InterPro" id="IPR010161">
    <property type="entry name" value="Peptidase_M20B"/>
</dbReference>
<dbReference type="NCBIfam" id="TIGR01882">
    <property type="entry name" value="peptidase-T"/>
    <property type="match status" value="1"/>
</dbReference>
<dbReference type="NCBIfam" id="NF003976">
    <property type="entry name" value="PRK05469.1"/>
    <property type="match status" value="1"/>
</dbReference>
<dbReference type="NCBIfam" id="NF009920">
    <property type="entry name" value="PRK13381.1"/>
    <property type="match status" value="1"/>
</dbReference>
<dbReference type="PANTHER" id="PTHR42994">
    <property type="entry name" value="PEPTIDASE T"/>
    <property type="match status" value="1"/>
</dbReference>
<dbReference type="PANTHER" id="PTHR42994:SF1">
    <property type="entry name" value="PEPTIDASE T"/>
    <property type="match status" value="1"/>
</dbReference>
<dbReference type="Pfam" id="PF07687">
    <property type="entry name" value="M20_dimer"/>
    <property type="match status" value="1"/>
</dbReference>
<dbReference type="Pfam" id="PF01546">
    <property type="entry name" value="Peptidase_M20"/>
    <property type="match status" value="1"/>
</dbReference>
<dbReference type="PIRSF" id="PIRSF037215">
    <property type="entry name" value="Peptidase_M20B"/>
    <property type="match status" value="1"/>
</dbReference>
<dbReference type="SUPFAM" id="SSF55031">
    <property type="entry name" value="Bacterial exopeptidase dimerisation domain"/>
    <property type="match status" value="1"/>
</dbReference>
<dbReference type="SUPFAM" id="SSF53187">
    <property type="entry name" value="Zn-dependent exopeptidases"/>
    <property type="match status" value="1"/>
</dbReference>
<dbReference type="PROSITE" id="PS00758">
    <property type="entry name" value="ARGE_DAPE_CPG2_1"/>
    <property type="match status" value="1"/>
</dbReference>
<dbReference type="PROSITE" id="PS00759">
    <property type="entry name" value="ARGE_DAPE_CPG2_2"/>
    <property type="match status" value="1"/>
</dbReference>
<reference key="1">
    <citation type="submission" date="2007-09" db="EMBL/GenBank/DDBJ databases">
        <title>Complete sequence of chromosome of Serratia proteamaculans 568.</title>
        <authorList>
            <consortium name="US DOE Joint Genome Institute"/>
            <person name="Copeland A."/>
            <person name="Lucas S."/>
            <person name="Lapidus A."/>
            <person name="Barry K."/>
            <person name="Glavina del Rio T."/>
            <person name="Dalin E."/>
            <person name="Tice H."/>
            <person name="Pitluck S."/>
            <person name="Chain P."/>
            <person name="Malfatti S."/>
            <person name="Shin M."/>
            <person name="Vergez L."/>
            <person name="Schmutz J."/>
            <person name="Larimer F."/>
            <person name="Land M."/>
            <person name="Hauser L."/>
            <person name="Kyrpides N."/>
            <person name="Kim E."/>
            <person name="Taghavi S."/>
            <person name="Newman L."/>
            <person name="Vangronsveld J."/>
            <person name="van der Lelie D."/>
            <person name="Richardson P."/>
        </authorList>
    </citation>
    <scope>NUCLEOTIDE SEQUENCE [LARGE SCALE GENOMIC DNA]</scope>
    <source>
        <strain>568</strain>
    </source>
</reference>
<evidence type="ECO:0000255" key="1">
    <source>
        <dbReference type="HAMAP-Rule" id="MF_00550"/>
    </source>
</evidence>
<name>PEPT_SERP5</name>
<protein>
    <recommendedName>
        <fullName evidence="1">Peptidase T</fullName>
        <ecNumber evidence="1">3.4.11.4</ecNumber>
    </recommendedName>
    <alternativeName>
        <fullName evidence="1">Aminotripeptidase</fullName>
        <shortName evidence="1">Tripeptidase</shortName>
    </alternativeName>
    <alternativeName>
        <fullName evidence="1">Tripeptide aminopeptidase</fullName>
    </alternativeName>
</protein>